<reference key="1">
    <citation type="journal article" date="2013" name="Proc. Natl. Acad. Sci. U.S.A.">
        <title>Polynucleobacter necessarius, a model for genome reduction in both free-living and symbiotic bacteria.</title>
        <authorList>
            <person name="Boscaro V."/>
            <person name="Felletti M."/>
            <person name="Vannini C."/>
            <person name="Ackerman M.S."/>
            <person name="Chain P.S."/>
            <person name="Malfatti S."/>
            <person name="Vergez L.M."/>
            <person name="Shin M."/>
            <person name="Doak T.G."/>
            <person name="Lynch M."/>
            <person name="Petroni G."/>
        </authorList>
    </citation>
    <scope>NUCLEOTIDE SEQUENCE [LARGE SCALE GENOMIC DNA]</scope>
    <source>
        <strain>STIR1</strain>
    </source>
</reference>
<name>ACPS_POLNS</name>
<protein>
    <recommendedName>
        <fullName evidence="1">Holo-[acyl-carrier-protein] synthase</fullName>
        <shortName evidence="1">Holo-ACP synthase</shortName>
        <ecNumber evidence="1">2.7.8.7</ecNumber>
    </recommendedName>
    <alternativeName>
        <fullName evidence="1">4'-phosphopantetheinyl transferase AcpS</fullName>
    </alternativeName>
</protein>
<sequence>MIIGIGTDILQIERLQAAYDRTKGRLAEKILGPDEMLVFQHRLARNHKRGIAFLATRFAAKEAFSKAIGLGMRMPMAWRSLQTLNEPSGRPVTSYLGTLAQFMQEKNWEAHVTVSDEQDMAIAQVIVTQKIRGSDE</sequence>
<comment type="function">
    <text evidence="1">Transfers the 4'-phosphopantetheine moiety from coenzyme A to a Ser of acyl-carrier-protein.</text>
</comment>
<comment type="catalytic activity">
    <reaction evidence="1">
        <text>apo-[ACP] + CoA = holo-[ACP] + adenosine 3',5'-bisphosphate + H(+)</text>
        <dbReference type="Rhea" id="RHEA:12068"/>
        <dbReference type="Rhea" id="RHEA-COMP:9685"/>
        <dbReference type="Rhea" id="RHEA-COMP:9690"/>
        <dbReference type="ChEBI" id="CHEBI:15378"/>
        <dbReference type="ChEBI" id="CHEBI:29999"/>
        <dbReference type="ChEBI" id="CHEBI:57287"/>
        <dbReference type="ChEBI" id="CHEBI:58343"/>
        <dbReference type="ChEBI" id="CHEBI:64479"/>
        <dbReference type="EC" id="2.7.8.7"/>
    </reaction>
</comment>
<comment type="cofactor">
    <cofactor evidence="1">
        <name>Mg(2+)</name>
        <dbReference type="ChEBI" id="CHEBI:18420"/>
    </cofactor>
</comment>
<comment type="subcellular location">
    <subcellularLocation>
        <location evidence="1">Cytoplasm</location>
    </subcellularLocation>
</comment>
<comment type="similarity">
    <text evidence="1">Belongs to the P-Pant transferase superfamily. AcpS family.</text>
</comment>
<evidence type="ECO:0000255" key="1">
    <source>
        <dbReference type="HAMAP-Rule" id="MF_00101"/>
    </source>
</evidence>
<gene>
    <name evidence="1" type="primary">acpS</name>
    <name type="ordered locus">Pnec_0417</name>
</gene>
<accession>B1XTL7</accession>
<keyword id="KW-0963">Cytoplasm</keyword>
<keyword id="KW-0275">Fatty acid biosynthesis</keyword>
<keyword id="KW-0276">Fatty acid metabolism</keyword>
<keyword id="KW-0444">Lipid biosynthesis</keyword>
<keyword id="KW-0443">Lipid metabolism</keyword>
<keyword id="KW-0460">Magnesium</keyword>
<keyword id="KW-0479">Metal-binding</keyword>
<keyword id="KW-0808">Transferase</keyword>
<dbReference type="EC" id="2.7.8.7" evidence="1"/>
<dbReference type="EMBL" id="CP001010">
    <property type="protein sequence ID" value="ACB43694.1"/>
    <property type="molecule type" value="Genomic_DNA"/>
</dbReference>
<dbReference type="SMR" id="B1XTL7"/>
<dbReference type="STRING" id="452638.Pnec_0417"/>
<dbReference type="KEGG" id="pne:Pnec_0417"/>
<dbReference type="eggNOG" id="COG0736">
    <property type="taxonomic scope" value="Bacteria"/>
</dbReference>
<dbReference type="HOGENOM" id="CLU_089696_3_1_4"/>
<dbReference type="OrthoDB" id="517356at2"/>
<dbReference type="GO" id="GO:0005737">
    <property type="term" value="C:cytoplasm"/>
    <property type="evidence" value="ECO:0007669"/>
    <property type="project" value="UniProtKB-SubCell"/>
</dbReference>
<dbReference type="GO" id="GO:0008897">
    <property type="term" value="F:holo-[acyl-carrier-protein] synthase activity"/>
    <property type="evidence" value="ECO:0007669"/>
    <property type="project" value="UniProtKB-UniRule"/>
</dbReference>
<dbReference type="GO" id="GO:0000287">
    <property type="term" value="F:magnesium ion binding"/>
    <property type="evidence" value="ECO:0007669"/>
    <property type="project" value="UniProtKB-UniRule"/>
</dbReference>
<dbReference type="GO" id="GO:0006633">
    <property type="term" value="P:fatty acid biosynthetic process"/>
    <property type="evidence" value="ECO:0007669"/>
    <property type="project" value="UniProtKB-UniRule"/>
</dbReference>
<dbReference type="Gene3D" id="3.90.470.20">
    <property type="entry name" value="4'-phosphopantetheinyl transferase domain"/>
    <property type="match status" value="1"/>
</dbReference>
<dbReference type="HAMAP" id="MF_00101">
    <property type="entry name" value="AcpS"/>
    <property type="match status" value="1"/>
</dbReference>
<dbReference type="InterPro" id="IPR008278">
    <property type="entry name" value="4-PPantetheinyl_Trfase_dom"/>
</dbReference>
<dbReference type="InterPro" id="IPR037143">
    <property type="entry name" value="4-PPantetheinyl_Trfase_dom_sf"/>
</dbReference>
<dbReference type="InterPro" id="IPR002582">
    <property type="entry name" value="ACPS"/>
</dbReference>
<dbReference type="InterPro" id="IPR004568">
    <property type="entry name" value="Ppantetheine-prot_Trfase_dom"/>
</dbReference>
<dbReference type="NCBIfam" id="TIGR00516">
    <property type="entry name" value="acpS"/>
    <property type="match status" value="1"/>
</dbReference>
<dbReference type="NCBIfam" id="TIGR00556">
    <property type="entry name" value="pantethn_trn"/>
    <property type="match status" value="1"/>
</dbReference>
<dbReference type="Pfam" id="PF01648">
    <property type="entry name" value="ACPS"/>
    <property type="match status" value="1"/>
</dbReference>
<dbReference type="SUPFAM" id="SSF56214">
    <property type="entry name" value="4'-phosphopantetheinyl transferase"/>
    <property type="match status" value="1"/>
</dbReference>
<feature type="chain" id="PRO_1000093904" description="Holo-[acyl-carrier-protein] synthase">
    <location>
        <begin position="1"/>
        <end position="136"/>
    </location>
</feature>
<feature type="binding site" evidence="1">
    <location>
        <position position="8"/>
    </location>
    <ligand>
        <name>Mg(2+)</name>
        <dbReference type="ChEBI" id="CHEBI:18420"/>
    </ligand>
</feature>
<feature type="binding site" evidence="1">
    <location>
        <position position="62"/>
    </location>
    <ligand>
        <name>Mg(2+)</name>
        <dbReference type="ChEBI" id="CHEBI:18420"/>
    </ligand>
</feature>
<proteinExistence type="inferred from homology"/>
<organism>
    <name type="scientific">Polynucleobacter necessarius subsp. necessarius (strain STIR1)</name>
    <dbReference type="NCBI Taxonomy" id="452638"/>
    <lineage>
        <taxon>Bacteria</taxon>
        <taxon>Pseudomonadati</taxon>
        <taxon>Pseudomonadota</taxon>
        <taxon>Betaproteobacteria</taxon>
        <taxon>Burkholderiales</taxon>
        <taxon>Burkholderiaceae</taxon>
        <taxon>Polynucleobacter</taxon>
    </lineage>
</organism>